<reference key="1">
    <citation type="journal article" date="1995" name="J. Gen. Virol.">
        <title>The nucleotide sequence and proposed genome organization of oat chlorotic stunt virus, a new soil-borne virus of cereals.</title>
        <authorList>
            <person name="Boonham N."/>
            <person name="Henry C.M."/>
            <person name="Wood K.R."/>
        </authorList>
    </citation>
    <scope>NUCLEOTIDE SEQUENCE [GENOMIC RNA]</scope>
</reference>
<accession>Q83927</accession>
<accession>Q83926</accession>
<dbReference type="EC" id="2.7.7.48"/>
<dbReference type="EMBL" id="X83964">
    <property type="protein sequence ID" value="CAA58796.1"/>
    <property type="molecule type" value="Genomic_RNA"/>
</dbReference>
<dbReference type="EMBL" id="X83964">
    <property type="protein sequence ID" value="CAA58797.1"/>
    <property type="molecule type" value="Genomic_RNA"/>
</dbReference>
<dbReference type="RefSeq" id="NP_619751.1">
    <property type="nucleotide sequence ID" value="NC_003633.1"/>
</dbReference>
<dbReference type="KEGG" id="vg:1732851"/>
<dbReference type="KEGG" id="vg:940248"/>
<dbReference type="Proteomes" id="UP000000573">
    <property type="component" value="Segment"/>
</dbReference>
<dbReference type="GO" id="GO:0000166">
    <property type="term" value="F:nucleotide binding"/>
    <property type="evidence" value="ECO:0007669"/>
    <property type="project" value="UniProtKB-KW"/>
</dbReference>
<dbReference type="GO" id="GO:0003723">
    <property type="term" value="F:RNA binding"/>
    <property type="evidence" value="ECO:0007669"/>
    <property type="project" value="InterPro"/>
</dbReference>
<dbReference type="GO" id="GO:0003968">
    <property type="term" value="F:RNA-directed RNA polymerase activity"/>
    <property type="evidence" value="ECO:0007669"/>
    <property type="project" value="UniProtKB-KW"/>
</dbReference>
<dbReference type="GO" id="GO:0039694">
    <property type="term" value="P:viral RNA genome replication"/>
    <property type="evidence" value="ECO:0007669"/>
    <property type="project" value="InterPro"/>
</dbReference>
<dbReference type="CDD" id="cd23206">
    <property type="entry name" value="Tombusviridae_RdRp"/>
    <property type="match status" value="1"/>
</dbReference>
<dbReference type="Gene3D" id="3.30.70.270">
    <property type="match status" value="1"/>
</dbReference>
<dbReference type="InterPro" id="IPR043502">
    <property type="entry name" value="DNA/RNA_pol_sf"/>
</dbReference>
<dbReference type="InterPro" id="IPR043128">
    <property type="entry name" value="Rev_trsase/Diguanyl_cyclase"/>
</dbReference>
<dbReference type="InterPro" id="IPR007094">
    <property type="entry name" value="RNA-dir_pol_PSvirus"/>
</dbReference>
<dbReference type="InterPro" id="IPR002166">
    <property type="entry name" value="RNA_pol_HCV"/>
</dbReference>
<dbReference type="Pfam" id="PF00998">
    <property type="entry name" value="RdRP_3"/>
    <property type="match status" value="1"/>
</dbReference>
<dbReference type="SUPFAM" id="SSF56672">
    <property type="entry name" value="DNA/RNA polymerases"/>
    <property type="match status" value="1"/>
</dbReference>
<dbReference type="PROSITE" id="PS50507">
    <property type="entry name" value="RDRP_SSRNA_POS"/>
    <property type="match status" value="1"/>
</dbReference>
<organism>
    <name type="scientific">Oat chlorotic stunt virus (isolate United Kingdom)</name>
    <name type="common">OCSV</name>
    <dbReference type="NCBI Taxonomy" id="652110"/>
    <lineage>
        <taxon>Viruses</taxon>
        <taxon>Riboviria</taxon>
        <taxon>Orthornavirae</taxon>
        <taxon>Kitrinoviricota</taxon>
        <taxon>Tolucaviricetes</taxon>
        <taxon>Tolivirales</taxon>
        <taxon>Tombusviridae</taxon>
        <taxon>Procedovirinae</taxon>
        <taxon>Avenavirus</taxon>
        <taxon>Avenavirus avenae</taxon>
    </lineage>
</organism>
<evidence type="ECO:0000255" key="1">
    <source>
        <dbReference type="PROSITE-ProRule" id="PRU00539"/>
    </source>
</evidence>
<evidence type="ECO:0000305" key="2"/>
<organismHost>
    <name type="scientific">Avena sativa</name>
    <name type="common">Oat</name>
    <dbReference type="NCBI Taxonomy" id="4498"/>
</organismHost>
<keyword id="KW-0547">Nucleotide-binding</keyword>
<keyword id="KW-0548">Nucleotidyltransferase</keyword>
<keyword id="KW-1185">Reference proteome</keyword>
<keyword id="KW-1159">RNA suppression of termination</keyword>
<keyword id="KW-0696">RNA-directed RNA polymerase</keyword>
<keyword id="KW-0808">Transferase</keyword>
<keyword id="KW-0693">Viral RNA replication</keyword>
<feature type="chain" id="PRO_0000399490" description="RNA-directed RNA polymerase">
    <location>
        <begin position="1"/>
        <end position="752"/>
    </location>
</feature>
<feature type="chain" id="PRO_0000399491" description="Protein p23">
    <location>
        <begin position="1"/>
        <end position="212"/>
    </location>
</feature>
<feature type="domain" description="RdRp catalytic" evidence="1">
    <location>
        <begin position="442"/>
        <end position="561"/>
    </location>
</feature>
<sequence>MSWPSLSGVPNGSSSVSTWLSVTHPRRSLPKELLTAFDTCNVAPEALLVLRSTSLMILEETCVVVGAAEMPTAEDNSGRELFIGSNGDPMERKTRTAHHAIKKTVRIKKGHRTTFAMTVANGAYVKFGARPLTEANVLVVRKWIVKLIADEYKDLRVCDQALVIDRATFLSFIPTMAWNNYKFIFHGKNAVTDRVAGENLFSRIAQWANPGKXGCPVVVTGQGCVISRAPDCAQLRVKRLLGVTKNRTCMRVSGVSPNIQIIPFNNDITTLERAIKERVFFVKNLDKGSPTKFVSPPRPAPGVFAQRLSNTLGLLVPFLPSTAPMSHQQFVDSTPSRKRKVYQQALEDISCHGLNLETDSKVKVFVKYEKTDHTSKADPVPRVISPRDPKYNLALGRYLRPMEERIFKALGKLFGHRTVMKGMDTDVTARVIQEKWNMFNKPVAIGLDASRFDQHVSLEALEFEHSVYLKCVRRMVDKRKLGNILRHQLLNKCYGNTPDGAVSYTIEGTRMSGDMNTSLGNCVLMCMMIHAYGLHKSVNIQLANNGDDCVVFLEQSDLATFSEGLFEWFLEMGFNMAIEEPSYELEHIEFCQCRPVFDGVKYTMCRNPRTAIAKDSVYLKHVDQFVTYSSWLNAVGTGGLALAGGLPIFDAFYTCYKRNSNSHWFSGRKGRLKTLSSVDDSLPWFMRELGLKGKRSSAEPLPASRASFYLAWGVTPCEQLELEKYYKSFKLDTSTLLEEHLWQPRGVFPDED</sequence>
<name>RDRP_OCSVU</name>
<protein>
    <recommendedName>
        <fullName>RNA-directed RNA polymerase</fullName>
        <ecNumber>2.7.7.48</ecNumber>
    </recommendedName>
    <alternativeName>
        <fullName>Protein p84</fullName>
    </alternativeName>
    <component>
        <recommendedName>
            <fullName>Protein p23</fullName>
        </recommendedName>
    </component>
</protein>
<proteinExistence type="inferred from homology"/>
<gene>
    <name type="ORF">ORF1</name>
</gene>
<comment type="function">
    <text evidence="2">RNA-dependent RNA polymerase that plays an essential role in the virus replication.</text>
</comment>
<comment type="catalytic activity">
    <reaction evidence="1">
        <text>RNA(n) + a ribonucleoside 5'-triphosphate = RNA(n+1) + diphosphate</text>
        <dbReference type="Rhea" id="RHEA:21248"/>
        <dbReference type="Rhea" id="RHEA-COMP:14527"/>
        <dbReference type="Rhea" id="RHEA-COMP:17342"/>
        <dbReference type="ChEBI" id="CHEBI:33019"/>
        <dbReference type="ChEBI" id="CHEBI:61557"/>
        <dbReference type="ChEBI" id="CHEBI:140395"/>
        <dbReference type="EC" id="2.7.7.48"/>
    </reaction>
</comment>
<comment type="miscellaneous">
    <text>Readthrough of the terminator UAG occurs at position 213.</text>
</comment>
<comment type="similarity">
    <text evidence="2">Belongs to the tombusviridae RNA polymerase family.</text>
</comment>